<accession>Q7RTY5</accession>
<accession>Q08E82</accession>
<accession>Q0VAD4</accession>
<comment type="interaction">
    <interactant intactId="EBI-21891692">
        <id>Q7RTY5</id>
    </interactant>
    <interactant intactId="EBI-2130449">
        <id>Q6AZZ1</id>
        <label>TRIM68</label>
    </interactant>
    <organismsDiffer>false</organismsDiffer>
    <experiments>2</experiments>
</comment>
<comment type="subcellular location">
    <subcellularLocation>
        <location evidence="6">Secreted</location>
    </subcellularLocation>
</comment>
<comment type="alternative products">
    <event type="alternative splicing"/>
    <isoform>
        <id>Q7RTY5-2</id>
        <name>1</name>
        <sequence type="displayed"/>
    </isoform>
    <isoform>
        <id>Q7RTY5-3</id>
        <name>2</name>
        <sequence type="described" ref="VSP_033287"/>
    </isoform>
</comment>
<comment type="similarity">
    <text evidence="3">Belongs to the peptidase S1 family.</text>
</comment>
<comment type="sequence caution" evidence="6">
    <conflict type="miscellaneous discrepancy">
        <sequence resource="EMBL-CDS" id="CAD67963"/>
    </conflict>
    <text>Aberrant splicing.</text>
</comment>
<name>PRS48_HUMAN</name>
<gene>
    <name type="primary">PRSS48</name>
    <name type="synonym">ESSPL</name>
</gene>
<feature type="signal peptide" evidence="2">
    <location>
        <begin position="1"/>
        <end position="20"/>
    </location>
</feature>
<feature type="chain" id="PRO_5000095975" description="Serine protease 48">
    <location>
        <begin position="21"/>
        <end position="328"/>
    </location>
</feature>
<feature type="domain" description="Peptidase S1" evidence="3">
    <location>
        <begin position="28"/>
        <end position="267"/>
    </location>
</feature>
<feature type="active site" description="Charge relay system" evidence="1">
    <location>
        <position position="68"/>
    </location>
</feature>
<feature type="active site" description="Charge relay system" evidence="1">
    <location>
        <position position="114"/>
    </location>
</feature>
<feature type="active site" description="Charge relay system" evidence="1">
    <location>
        <position position="220"/>
    </location>
</feature>
<feature type="glycosylation site" description="N-linked (GlcNAc...) asparagine" evidence="2">
    <location>
        <position position="263"/>
    </location>
</feature>
<feature type="disulfide bond" evidence="3">
    <location>
        <begin position="53"/>
        <end position="69"/>
    </location>
</feature>
<feature type="disulfide bond" evidence="3">
    <location>
        <begin position="148"/>
        <end position="226"/>
    </location>
</feature>
<feature type="disulfide bond" evidence="3">
    <location>
        <begin position="181"/>
        <end position="205"/>
    </location>
</feature>
<feature type="disulfide bond" evidence="3">
    <location>
        <begin position="216"/>
        <end position="244"/>
    </location>
</feature>
<feature type="splice variant" id="VSP_033287" description="In isoform 2." evidence="5">
    <location>
        <begin position="18"/>
        <end position="160"/>
    </location>
</feature>
<feature type="sequence variant" id="VAR_042920" description="In dbSNP:rs36097019." evidence="4">
    <original>C</original>
    <variation>Y</variation>
    <location>
        <position position="53"/>
    </location>
</feature>
<feature type="sequence variant" id="VAR_042921" description="In dbSNP:rs17027505.">
    <original>L</original>
    <variation>S</variation>
    <location>
        <position position="118"/>
    </location>
</feature>
<feature type="sequence variant" id="VAR_042922" description="In dbSNP:rs13126069." evidence="4">
    <original>R</original>
    <variation>C</variation>
    <location>
        <position position="290"/>
    </location>
</feature>
<organism>
    <name type="scientific">Homo sapiens</name>
    <name type="common">Human</name>
    <dbReference type="NCBI Taxonomy" id="9606"/>
    <lineage>
        <taxon>Eukaryota</taxon>
        <taxon>Metazoa</taxon>
        <taxon>Chordata</taxon>
        <taxon>Craniata</taxon>
        <taxon>Vertebrata</taxon>
        <taxon>Euteleostomi</taxon>
        <taxon>Mammalia</taxon>
        <taxon>Eutheria</taxon>
        <taxon>Euarchontoglires</taxon>
        <taxon>Primates</taxon>
        <taxon>Haplorrhini</taxon>
        <taxon>Catarrhini</taxon>
        <taxon>Hominidae</taxon>
        <taxon>Homo</taxon>
    </lineage>
</organism>
<reference key="1">
    <citation type="journal article" date="2005" name="Nature">
        <title>Generation and annotation of the DNA sequences of human chromosomes 2 and 4.</title>
        <authorList>
            <person name="Hillier L.W."/>
            <person name="Graves T.A."/>
            <person name="Fulton R.S."/>
            <person name="Fulton L.A."/>
            <person name="Pepin K.H."/>
            <person name="Minx P."/>
            <person name="Wagner-McPherson C."/>
            <person name="Layman D."/>
            <person name="Wylie K."/>
            <person name="Sekhon M."/>
            <person name="Becker M.C."/>
            <person name="Fewell G.A."/>
            <person name="Delehaunty K.D."/>
            <person name="Miner T.L."/>
            <person name="Nash W.E."/>
            <person name="Kremitzki C."/>
            <person name="Oddy L."/>
            <person name="Du H."/>
            <person name="Sun H."/>
            <person name="Bradshaw-Cordum H."/>
            <person name="Ali J."/>
            <person name="Carter J."/>
            <person name="Cordes M."/>
            <person name="Harris A."/>
            <person name="Isak A."/>
            <person name="van Brunt A."/>
            <person name="Nguyen C."/>
            <person name="Du F."/>
            <person name="Courtney L."/>
            <person name="Kalicki J."/>
            <person name="Ozersky P."/>
            <person name="Abbott S."/>
            <person name="Armstrong J."/>
            <person name="Belter E.A."/>
            <person name="Caruso L."/>
            <person name="Cedroni M."/>
            <person name="Cotton M."/>
            <person name="Davidson T."/>
            <person name="Desai A."/>
            <person name="Elliott G."/>
            <person name="Erb T."/>
            <person name="Fronick C."/>
            <person name="Gaige T."/>
            <person name="Haakenson W."/>
            <person name="Haglund K."/>
            <person name="Holmes A."/>
            <person name="Harkins R."/>
            <person name="Kim K."/>
            <person name="Kruchowski S.S."/>
            <person name="Strong C.M."/>
            <person name="Grewal N."/>
            <person name="Goyea E."/>
            <person name="Hou S."/>
            <person name="Levy A."/>
            <person name="Martinka S."/>
            <person name="Mead K."/>
            <person name="McLellan M.D."/>
            <person name="Meyer R."/>
            <person name="Randall-Maher J."/>
            <person name="Tomlinson C."/>
            <person name="Dauphin-Kohlberg S."/>
            <person name="Kozlowicz-Reilly A."/>
            <person name="Shah N."/>
            <person name="Swearengen-Shahid S."/>
            <person name="Snider J."/>
            <person name="Strong J.T."/>
            <person name="Thompson J."/>
            <person name="Yoakum M."/>
            <person name="Leonard S."/>
            <person name="Pearman C."/>
            <person name="Trani L."/>
            <person name="Radionenko M."/>
            <person name="Waligorski J.E."/>
            <person name="Wang C."/>
            <person name="Rock S.M."/>
            <person name="Tin-Wollam A.-M."/>
            <person name="Maupin R."/>
            <person name="Latreille P."/>
            <person name="Wendl M.C."/>
            <person name="Yang S.-P."/>
            <person name="Pohl C."/>
            <person name="Wallis J.W."/>
            <person name="Spieth J."/>
            <person name="Bieri T.A."/>
            <person name="Berkowicz N."/>
            <person name="Nelson J.O."/>
            <person name="Osborne J."/>
            <person name="Ding L."/>
            <person name="Meyer R."/>
            <person name="Sabo A."/>
            <person name="Shotland Y."/>
            <person name="Sinha P."/>
            <person name="Wohldmann P.E."/>
            <person name="Cook L.L."/>
            <person name="Hickenbotham M.T."/>
            <person name="Eldred J."/>
            <person name="Williams D."/>
            <person name="Jones T.A."/>
            <person name="She X."/>
            <person name="Ciccarelli F.D."/>
            <person name="Izaurralde E."/>
            <person name="Taylor J."/>
            <person name="Schmutz J."/>
            <person name="Myers R.M."/>
            <person name="Cox D.R."/>
            <person name="Huang X."/>
            <person name="McPherson J.D."/>
            <person name="Mardis E.R."/>
            <person name="Clifton S.W."/>
            <person name="Warren W.C."/>
            <person name="Chinwalla A.T."/>
            <person name="Eddy S.R."/>
            <person name="Marra M.A."/>
            <person name="Ovcharenko I."/>
            <person name="Furey T.S."/>
            <person name="Miller W."/>
            <person name="Eichler E.E."/>
            <person name="Bork P."/>
            <person name="Suyama M."/>
            <person name="Torrents D."/>
            <person name="Waterston R.H."/>
            <person name="Wilson R.K."/>
        </authorList>
    </citation>
    <scope>NUCLEOTIDE SEQUENCE [LARGE SCALE GENOMIC DNA]</scope>
</reference>
<reference key="2">
    <citation type="journal article" date="2004" name="Genome Res.">
        <title>The status, quality, and expansion of the NIH full-length cDNA project: the Mammalian Gene Collection (MGC).</title>
        <authorList>
            <consortium name="The MGC Project Team"/>
        </authorList>
    </citation>
    <scope>NUCLEOTIDE SEQUENCE [LARGE SCALE MRNA] (ISOFORMS 1 AND 2)</scope>
    <scope>VARIANTS TYR-53 AND CYS-290</scope>
</reference>
<reference key="3">
    <citation type="journal article" date="2003" name="Nat. Rev. Genet.">
        <title>Human and mouse proteases: a comparative genomic approach.</title>
        <authorList>
            <person name="Puente X.S."/>
            <person name="Sanchez L.M."/>
            <person name="Overall C.M."/>
            <person name="Lopez-Otin C."/>
        </authorList>
    </citation>
    <scope>IDENTIFICATION</scope>
</reference>
<evidence type="ECO:0000250" key="1"/>
<evidence type="ECO:0000255" key="2"/>
<evidence type="ECO:0000255" key="3">
    <source>
        <dbReference type="PROSITE-ProRule" id="PRU00274"/>
    </source>
</evidence>
<evidence type="ECO:0000269" key="4">
    <source>
    </source>
</evidence>
<evidence type="ECO:0000303" key="5">
    <source>
    </source>
</evidence>
<evidence type="ECO:0000305" key="6"/>
<keyword id="KW-0025">Alternative splicing</keyword>
<keyword id="KW-1015">Disulfide bond</keyword>
<keyword id="KW-0325">Glycoprotein</keyword>
<keyword id="KW-0378">Hydrolase</keyword>
<keyword id="KW-0645">Protease</keyword>
<keyword id="KW-1185">Reference proteome</keyword>
<keyword id="KW-0964">Secreted</keyword>
<keyword id="KW-0720">Serine protease</keyword>
<keyword id="KW-0732">Signal</keyword>
<sequence>MGPAGCAFTLLLLLGISVCGQPVYSSRVVGGQDAAAGRWPWQVSLHFDHNFICGGSLVSERLILTAAHCIQPTWTTFSYTVWLGSITVGDSRKRVKYYVSKIVIHPKYQDTTADVALLKLSSQVTFTSAILPICLPSVTKQLAIPPFCWVTGWGKVKESSDRDYHSALQEAEVPIIDRQACEQLYNPIGIFLPALEPVIKEDKICAGDTQNMKDSCKGDSGGPLSCHIDGVWIQTGVVSWGLECGKSLPGVYTNVIYYQKWINATISRANNLDFSDFLFPIVLLSLALLRPSCAFGPNTIHRVGTVAEAVACIQGWEENAWRFSPRGR</sequence>
<protein>
    <recommendedName>
        <fullName>Serine protease 48</fullName>
        <ecNumber>3.4.21.-</ecNumber>
    </recommendedName>
    <alternativeName>
        <fullName>Epidermis-specific serine protease-like protein</fullName>
    </alternativeName>
</protein>
<dbReference type="EC" id="3.4.21.-"/>
<dbReference type="EMBL" id="AC104819">
    <property type="status" value="NOT_ANNOTATED_CDS"/>
    <property type="molecule type" value="Genomic_DNA"/>
</dbReference>
<dbReference type="EMBL" id="BC121109">
    <property type="protein sequence ID" value="AAI21110.1"/>
    <property type="molecule type" value="mRNA"/>
</dbReference>
<dbReference type="EMBL" id="BC121110">
    <property type="protein sequence ID" value="AAI21111.1"/>
    <property type="molecule type" value="mRNA"/>
</dbReference>
<dbReference type="EMBL" id="BN000134">
    <property type="protein sequence ID" value="CAD67963.1"/>
    <property type="status" value="ALT_SEQ"/>
    <property type="molecule type" value="mRNA"/>
</dbReference>
<dbReference type="CCDS" id="CCDS47145.1">
    <molecule id="Q7RTY5-2"/>
</dbReference>
<dbReference type="RefSeq" id="NP_899231.4">
    <molecule id="Q7RTY5-2"/>
    <property type="nucleotide sequence ID" value="NM_183375.5"/>
</dbReference>
<dbReference type="RefSeq" id="XP_011530224.1">
    <property type="nucleotide sequence ID" value="XM_011531922.2"/>
</dbReference>
<dbReference type="SMR" id="Q7RTY5"/>
<dbReference type="BioGRID" id="131340">
    <property type="interactions" value="4"/>
</dbReference>
<dbReference type="FunCoup" id="Q7RTY5">
    <property type="interactions" value="132"/>
</dbReference>
<dbReference type="IntAct" id="Q7RTY5">
    <property type="interactions" value="4"/>
</dbReference>
<dbReference type="STRING" id="9606.ENSP00000401328"/>
<dbReference type="MEROPS" id="S01.325"/>
<dbReference type="GlyCosmos" id="Q7RTY5">
    <property type="glycosylation" value="1 site, No reported glycans"/>
</dbReference>
<dbReference type="GlyGen" id="Q7RTY5">
    <property type="glycosylation" value="1 site, 12 N-linked glycans (1 site)"/>
</dbReference>
<dbReference type="BioMuta" id="PRSS48"/>
<dbReference type="DMDM" id="302393737"/>
<dbReference type="MassIVE" id="Q7RTY5"/>
<dbReference type="PaxDb" id="9606-ENSP00000401328"/>
<dbReference type="PeptideAtlas" id="Q7RTY5"/>
<dbReference type="Antibodypedia" id="53070">
    <property type="antibodies" value="79 antibodies from 16 providers"/>
</dbReference>
<dbReference type="DNASU" id="345062"/>
<dbReference type="Ensembl" id="ENST00000441586.2">
    <molecule id="Q7RTY5-3"/>
    <property type="protein sequence ID" value="ENSP00000401420.2"/>
    <property type="gene ID" value="ENSG00000189099.12"/>
</dbReference>
<dbReference type="Ensembl" id="ENST00000455694.7">
    <molecule id="Q7RTY5-2"/>
    <property type="protein sequence ID" value="ENSP00000401328.2"/>
    <property type="gene ID" value="ENSG00000189099.12"/>
</dbReference>
<dbReference type="GeneID" id="345062"/>
<dbReference type="KEGG" id="hsa:345062"/>
<dbReference type="MANE-Select" id="ENST00000455694.7">
    <property type="protein sequence ID" value="ENSP00000401328.2"/>
    <property type="RefSeq nucleotide sequence ID" value="NM_183375.5"/>
    <property type="RefSeq protein sequence ID" value="NP_899231.4"/>
</dbReference>
<dbReference type="UCSC" id="uc011cif.3">
    <molecule id="Q7RTY5-2"/>
    <property type="organism name" value="human"/>
</dbReference>
<dbReference type="AGR" id="HGNC:24635"/>
<dbReference type="CTD" id="345062"/>
<dbReference type="GeneCards" id="PRSS48"/>
<dbReference type="HGNC" id="HGNC:24635">
    <property type="gene designation" value="PRSS48"/>
</dbReference>
<dbReference type="HPA" id="ENSG00000189099">
    <property type="expression patterns" value="Not detected"/>
</dbReference>
<dbReference type="neXtProt" id="NX_Q7RTY5"/>
<dbReference type="OpenTargets" id="ENSG00000189099"/>
<dbReference type="PharmGKB" id="PA165664477"/>
<dbReference type="VEuPathDB" id="HostDB:ENSG00000189099"/>
<dbReference type="eggNOG" id="KOG3627">
    <property type="taxonomic scope" value="Eukaryota"/>
</dbReference>
<dbReference type="GeneTree" id="ENSGT00940000160791"/>
<dbReference type="HOGENOM" id="CLU_006842_0_4_1"/>
<dbReference type="InParanoid" id="Q7RTY5"/>
<dbReference type="OMA" id="PRTWNTF"/>
<dbReference type="OrthoDB" id="10002959at2759"/>
<dbReference type="PAN-GO" id="Q7RTY5">
    <property type="GO annotations" value="3 GO annotations based on evolutionary models"/>
</dbReference>
<dbReference type="PhylomeDB" id="Q7RTY5"/>
<dbReference type="TreeFam" id="TF351676"/>
<dbReference type="PathwayCommons" id="Q7RTY5"/>
<dbReference type="SignaLink" id="Q7RTY5"/>
<dbReference type="BioGRID-ORCS" id="345062">
    <property type="hits" value="9 hits in 1142 CRISPR screens"/>
</dbReference>
<dbReference type="ChiTaRS" id="PRSS48">
    <property type="organism name" value="human"/>
</dbReference>
<dbReference type="GenomeRNAi" id="345062"/>
<dbReference type="Pharos" id="Q7RTY5">
    <property type="development level" value="Tdark"/>
</dbReference>
<dbReference type="PRO" id="PR:Q7RTY5"/>
<dbReference type="Proteomes" id="UP000005640">
    <property type="component" value="Chromosome 4"/>
</dbReference>
<dbReference type="RNAct" id="Q7RTY5">
    <property type="molecule type" value="protein"/>
</dbReference>
<dbReference type="Bgee" id="ENSG00000189099">
    <property type="expression patterns" value="Expressed in male germ line stem cell (sensu Vertebrata) in testis and 67 other cell types or tissues"/>
</dbReference>
<dbReference type="ExpressionAtlas" id="Q7RTY5">
    <property type="expression patterns" value="baseline and differential"/>
</dbReference>
<dbReference type="GO" id="GO:0005615">
    <property type="term" value="C:extracellular space"/>
    <property type="evidence" value="ECO:0000318"/>
    <property type="project" value="GO_Central"/>
</dbReference>
<dbReference type="GO" id="GO:0004252">
    <property type="term" value="F:serine-type endopeptidase activity"/>
    <property type="evidence" value="ECO:0000318"/>
    <property type="project" value="GO_Central"/>
</dbReference>
<dbReference type="GO" id="GO:0006508">
    <property type="term" value="P:proteolysis"/>
    <property type="evidence" value="ECO:0000318"/>
    <property type="project" value="GO_Central"/>
</dbReference>
<dbReference type="CDD" id="cd00190">
    <property type="entry name" value="Tryp_SPc"/>
    <property type="match status" value="1"/>
</dbReference>
<dbReference type="FunFam" id="2.40.10.10:FF:000039">
    <property type="entry name" value="Brain-specific serine protease 4"/>
    <property type="match status" value="1"/>
</dbReference>
<dbReference type="Gene3D" id="2.40.10.10">
    <property type="entry name" value="Trypsin-like serine proteases"/>
    <property type="match status" value="1"/>
</dbReference>
<dbReference type="InterPro" id="IPR009003">
    <property type="entry name" value="Peptidase_S1_PA"/>
</dbReference>
<dbReference type="InterPro" id="IPR043504">
    <property type="entry name" value="Peptidase_S1_PA_chymotrypsin"/>
</dbReference>
<dbReference type="InterPro" id="IPR001314">
    <property type="entry name" value="Peptidase_S1A"/>
</dbReference>
<dbReference type="InterPro" id="IPR001254">
    <property type="entry name" value="Trypsin_dom"/>
</dbReference>
<dbReference type="InterPro" id="IPR018114">
    <property type="entry name" value="TRYPSIN_HIS"/>
</dbReference>
<dbReference type="InterPro" id="IPR033116">
    <property type="entry name" value="TRYPSIN_SER"/>
</dbReference>
<dbReference type="PANTHER" id="PTHR24253:SF162">
    <property type="entry name" value="SERINE PROTEASE 48"/>
    <property type="match status" value="1"/>
</dbReference>
<dbReference type="PANTHER" id="PTHR24253">
    <property type="entry name" value="TRANSMEMBRANE PROTEASE SERINE"/>
    <property type="match status" value="1"/>
</dbReference>
<dbReference type="Pfam" id="PF00089">
    <property type="entry name" value="Trypsin"/>
    <property type="match status" value="1"/>
</dbReference>
<dbReference type="PRINTS" id="PR00722">
    <property type="entry name" value="CHYMOTRYPSIN"/>
</dbReference>
<dbReference type="SMART" id="SM00020">
    <property type="entry name" value="Tryp_SPc"/>
    <property type="match status" value="1"/>
</dbReference>
<dbReference type="SUPFAM" id="SSF50494">
    <property type="entry name" value="Trypsin-like serine proteases"/>
    <property type="match status" value="1"/>
</dbReference>
<dbReference type="PROSITE" id="PS50240">
    <property type="entry name" value="TRYPSIN_DOM"/>
    <property type="match status" value="1"/>
</dbReference>
<dbReference type="PROSITE" id="PS00134">
    <property type="entry name" value="TRYPSIN_HIS"/>
    <property type="match status" value="1"/>
</dbReference>
<dbReference type="PROSITE" id="PS00135">
    <property type="entry name" value="TRYPSIN_SER"/>
    <property type="match status" value="1"/>
</dbReference>
<proteinExistence type="evidence at protein level"/>